<gene>
    <name evidence="1" type="primary">groEL</name>
    <name evidence="1" type="synonym">groL</name>
    <name type="ordered locus">SZO_01280</name>
</gene>
<feature type="chain" id="PRO_1000212209" description="Chaperonin GroEL">
    <location>
        <begin position="1"/>
        <end position="541"/>
    </location>
</feature>
<feature type="binding site" evidence="1">
    <location>
        <begin position="29"/>
        <end position="32"/>
    </location>
    <ligand>
        <name>ATP</name>
        <dbReference type="ChEBI" id="CHEBI:30616"/>
    </ligand>
</feature>
<feature type="binding site" evidence="1">
    <location>
        <begin position="86"/>
        <end position="90"/>
    </location>
    <ligand>
        <name>ATP</name>
        <dbReference type="ChEBI" id="CHEBI:30616"/>
    </ligand>
</feature>
<feature type="binding site" evidence="1">
    <location>
        <position position="413"/>
    </location>
    <ligand>
        <name>ATP</name>
        <dbReference type="ChEBI" id="CHEBI:30616"/>
    </ligand>
</feature>
<feature type="binding site" evidence="1">
    <location>
        <begin position="476"/>
        <end position="478"/>
    </location>
    <ligand>
        <name>ATP</name>
        <dbReference type="ChEBI" id="CHEBI:30616"/>
    </ligand>
</feature>
<feature type="binding site" evidence="1">
    <location>
        <position position="492"/>
    </location>
    <ligand>
        <name>ATP</name>
        <dbReference type="ChEBI" id="CHEBI:30616"/>
    </ligand>
</feature>
<keyword id="KW-0067">ATP-binding</keyword>
<keyword id="KW-0143">Chaperone</keyword>
<keyword id="KW-0963">Cytoplasm</keyword>
<keyword id="KW-0413">Isomerase</keyword>
<keyword id="KW-0547">Nucleotide-binding</keyword>
<name>CH60_STRS7</name>
<proteinExistence type="inferred from homology"/>
<dbReference type="EC" id="5.6.1.7" evidence="1"/>
<dbReference type="EMBL" id="FM204884">
    <property type="protein sequence ID" value="CAW97786.1"/>
    <property type="molecule type" value="Genomic_DNA"/>
</dbReference>
<dbReference type="SMR" id="C0MES3"/>
<dbReference type="KEGG" id="seq:SZO_01280"/>
<dbReference type="eggNOG" id="COG0459">
    <property type="taxonomic scope" value="Bacteria"/>
</dbReference>
<dbReference type="HOGENOM" id="CLU_016503_3_0_9"/>
<dbReference type="Proteomes" id="UP000001368">
    <property type="component" value="Chromosome"/>
</dbReference>
<dbReference type="GO" id="GO:0005737">
    <property type="term" value="C:cytoplasm"/>
    <property type="evidence" value="ECO:0007669"/>
    <property type="project" value="UniProtKB-SubCell"/>
</dbReference>
<dbReference type="GO" id="GO:0005524">
    <property type="term" value="F:ATP binding"/>
    <property type="evidence" value="ECO:0007669"/>
    <property type="project" value="UniProtKB-UniRule"/>
</dbReference>
<dbReference type="GO" id="GO:0140662">
    <property type="term" value="F:ATP-dependent protein folding chaperone"/>
    <property type="evidence" value="ECO:0007669"/>
    <property type="project" value="InterPro"/>
</dbReference>
<dbReference type="GO" id="GO:0016853">
    <property type="term" value="F:isomerase activity"/>
    <property type="evidence" value="ECO:0007669"/>
    <property type="project" value="UniProtKB-KW"/>
</dbReference>
<dbReference type="GO" id="GO:0051082">
    <property type="term" value="F:unfolded protein binding"/>
    <property type="evidence" value="ECO:0007669"/>
    <property type="project" value="UniProtKB-UniRule"/>
</dbReference>
<dbReference type="GO" id="GO:0042026">
    <property type="term" value="P:protein refolding"/>
    <property type="evidence" value="ECO:0007669"/>
    <property type="project" value="UniProtKB-UniRule"/>
</dbReference>
<dbReference type="CDD" id="cd03344">
    <property type="entry name" value="GroEL"/>
    <property type="match status" value="1"/>
</dbReference>
<dbReference type="FunFam" id="1.10.560.10:FF:000001">
    <property type="entry name" value="60 kDa chaperonin"/>
    <property type="match status" value="1"/>
</dbReference>
<dbReference type="FunFam" id="3.50.7.10:FF:000001">
    <property type="entry name" value="60 kDa chaperonin"/>
    <property type="match status" value="1"/>
</dbReference>
<dbReference type="Gene3D" id="3.50.7.10">
    <property type="entry name" value="GroEL"/>
    <property type="match status" value="1"/>
</dbReference>
<dbReference type="Gene3D" id="1.10.560.10">
    <property type="entry name" value="GroEL-like equatorial domain"/>
    <property type="match status" value="1"/>
</dbReference>
<dbReference type="Gene3D" id="3.30.260.10">
    <property type="entry name" value="TCP-1-like chaperonin intermediate domain"/>
    <property type="match status" value="1"/>
</dbReference>
<dbReference type="HAMAP" id="MF_00600">
    <property type="entry name" value="CH60"/>
    <property type="match status" value="1"/>
</dbReference>
<dbReference type="InterPro" id="IPR018370">
    <property type="entry name" value="Chaperonin_Cpn60_CS"/>
</dbReference>
<dbReference type="InterPro" id="IPR001844">
    <property type="entry name" value="Cpn60/GroEL"/>
</dbReference>
<dbReference type="InterPro" id="IPR002423">
    <property type="entry name" value="Cpn60/GroEL/TCP-1"/>
</dbReference>
<dbReference type="InterPro" id="IPR027409">
    <property type="entry name" value="GroEL-like_apical_dom_sf"/>
</dbReference>
<dbReference type="InterPro" id="IPR027413">
    <property type="entry name" value="GROEL-like_equatorial_sf"/>
</dbReference>
<dbReference type="InterPro" id="IPR027410">
    <property type="entry name" value="TCP-1-like_intermed_sf"/>
</dbReference>
<dbReference type="NCBIfam" id="TIGR02348">
    <property type="entry name" value="GroEL"/>
    <property type="match status" value="1"/>
</dbReference>
<dbReference type="NCBIfam" id="NF000592">
    <property type="entry name" value="PRK00013.1"/>
    <property type="match status" value="1"/>
</dbReference>
<dbReference type="NCBIfam" id="NF009487">
    <property type="entry name" value="PRK12849.1"/>
    <property type="match status" value="1"/>
</dbReference>
<dbReference type="NCBIfam" id="NF009488">
    <property type="entry name" value="PRK12850.1"/>
    <property type="match status" value="1"/>
</dbReference>
<dbReference type="NCBIfam" id="NF009489">
    <property type="entry name" value="PRK12851.1"/>
    <property type="match status" value="1"/>
</dbReference>
<dbReference type="PANTHER" id="PTHR45633">
    <property type="entry name" value="60 KDA HEAT SHOCK PROTEIN, MITOCHONDRIAL"/>
    <property type="match status" value="1"/>
</dbReference>
<dbReference type="Pfam" id="PF00118">
    <property type="entry name" value="Cpn60_TCP1"/>
    <property type="match status" value="1"/>
</dbReference>
<dbReference type="PRINTS" id="PR00298">
    <property type="entry name" value="CHAPERONIN60"/>
</dbReference>
<dbReference type="SUPFAM" id="SSF52029">
    <property type="entry name" value="GroEL apical domain-like"/>
    <property type="match status" value="1"/>
</dbReference>
<dbReference type="SUPFAM" id="SSF48592">
    <property type="entry name" value="GroEL equatorial domain-like"/>
    <property type="match status" value="1"/>
</dbReference>
<dbReference type="SUPFAM" id="SSF54849">
    <property type="entry name" value="GroEL-intermediate domain like"/>
    <property type="match status" value="1"/>
</dbReference>
<dbReference type="PROSITE" id="PS00296">
    <property type="entry name" value="CHAPERONINS_CPN60"/>
    <property type="match status" value="1"/>
</dbReference>
<comment type="function">
    <text evidence="1">Together with its co-chaperonin GroES, plays an essential role in assisting protein folding. The GroEL-GroES system forms a nano-cage that allows encapsulation of the non-native substrate proteins and provides a physical environment optimized to promote and accelerate protein folding.</text>
</comment>
<comment type="catalytic activity">
    <reaction evidence="1">
        <text>ATP + H2O + a folded polypeptide = ADP + phosphate + an unfolded polypeptide.</text>
        <dbReference type="EC" id="5.6.1.7"/>
    </reaction>
</comment>
<comment type="subunit">
    <text evidence="1">Forms a cylinder of 14 subunits composed of two heptameric rings stacked back-to-back. Interacts with the co-chaperonin GroES.</text>
</comment>
<comment type="subcellular location">
    <subcellularLocation>
        <location evidence="1">Cytoplasm</location>
    </subcellularLocation>
</comment>
<comment type="similarity">
    <text evidence="1">Belongs to the chaperonin (HSP60) family.</text>
</comment>
<protein>
    <recommendedName>
        <fullName evidence="1">Chaperonin GroEL</fullName>
        <ecNumber evidence="1">5.6.1.7</ecNumber>
    </recommendedName>
    <alternativeName>
        <fullName evidence="1">60 kDa chaperonin</fullName>
    </alternativeName>
    <alternativeName>
        <fullName evidence="1">Chaperonin-60</fullName>
        <shortName evidence="1">Cpn60</shortName>
    </alternativeName>
</protein>
<organism>
    <name type="scientific">Streptococcus equi subsp. zooepidemicus (strain H70)</name>
    <dbReference type="NCBI Taxonomy" id="553483"/>
    <lineage>
        <taxon>Bacteria</taxon>
        <taxon>Bacillati</taxon>
        <taxon>Bacillota</taxon>
        <taxon>Bacilli</taxon>
        <taxon>Lactobacillales</taxon>
        <taxon>Streptococcaceae</taxon>
        <taxon>Streptococcus</taxon>
    </lineage>
</organism>
<evidence type="ECO:0000255" key="1">
    <source>
        <dbReference type="HAMAP-Rule" id="MF_00600"/>
    </source>
</evidence>
<accession>C0MES3</accession>
<reference key="1">
    <citation type="journal article" date="2009" name="PLoS Pathog.">
        <title>Genomic evidence for the evolution of Streptococcus equi: host restriction, increased virulence, and genetic exchange with human pathogens.</title>
        <authorList>
            <person name="Holden M.T.G."/>
            <person name="Heather Z."/>
            <person name="Paillot R."/>
            <person name="Steward K.F."/>
            <person name="Webb K."/>
            <person name="Ainslie F."/>
            <person name="Jourdan T."/>
            <person name="Bason N.C."/>
            <person name="Holroyd N.E."/>
            <person name="Mungall K."/>
            <person name="Quail M.A."/>
            <person name="Sanders M."/>
            <person name="Simmonds M."/>
            <person name="Willey D."/>
            <person name="Brooks K."/>
            <person name="Aanensen D.M."/>
            <person name="Spratt B.G."/>
            <person name="Jolley K.A."/>
            <person name="Maiden M.C.J."/>
            <person name="Kehoe M."/>
            <person name="Chanter N."/>
            <person name="Bentley S.D."/>
            <person name="Robinson C."/>
            <person name="Maskell D.J."/>
            <person name="Parkhill J."/>
            <person name="Waller A.S."/>
        </authorList>
    </citation>
    <scope>NUCLEOTIDE SEQUENCE [LARGE SCALE GENOMIC DNA]</scope>
    <source>
        <strain>H70</strain>
    </source>
</reference>
<sequence>MAKDIKFSADARESMVRGVDILADTVKVTLGPKGRNVVLEKAFGSPLITNDGVTIAKEIELEDHFENMGAKLVSEVASKTNDIAGDGTTTATVLTQAIVREGLKNVTAGANPIGIRRGIEAATTTAVEALKAVAQPVSGKEAIAQVAAVSSRSEKVGDYISEAMERVGNDGVITIEESRGMETELEVVEGMQFDRGYLSQYMVTDNEKMVADLENPFILITDKKISNIQDILPLLEEVLKTSRPLLIIADDVDGEALPTLVLNKIRGTFNVVAVKAPGFGDRRKAMLEDIAVLTGGTVITEDLGLELKDATMAALGQAAKVTVDKDNTVIVEGAGSSEAIANRVNLIKSQLETTTSEFDREKLQERLAKLAGGVAVIKVGAATETELKEMKLRIEDALNATRAAVEEGIVAGGGTALINVMDKVAALELDGDAATGRNIVLRALEEPVRQIAYNAGYEGSVIIDKLKNSAAGVGFNAATGEWVDMIATGIIDPVKVTRSALQNAASVAGLILTTEAVVATKPEPAAPAMPQGMDPGMMGGF</sequence>